<feature type="chain" id="PRO_0000437600" description="Efflux pump hmp6">
    <location>
        <begin position="1"/>
        <end position="564"/>
    </location>
</feature>
<feature type="transmembrane region" description="Helical" evidence="1">
    <location>
        <begin position="58"/>
        <end position="78"/>
    </location>
</feature>
<feature type="transmembrane region" description="Helical" evidence="1">
    <location>
        <begin position="96"/>
        <end position="118"/>
    </location>
</feature>
<feature type="transmembrane region" description="Helical" evidence="1">
    <location>
        <begin position="125"/>
        <end position="145"/>
    </location>
</feature>
<feature type="transmembrane region" description="Helical" evidence="1">
    <location>
        <begin position="156"/>
        <end position="176"/>
    </location>
</feature>
<feature type="transmembrane region" description="Helical" evidence="1">
    <location>
        <begin position="186"/>
        <end position="206"/>
    </location>
</feature>
<feature type="transmembrane region" description="Helical" evidence="1">
    <location>
        <begin position="214"/>
        <end position="234"/>
    </location>
</feature>
<feature type="transmembrane region" description="Helical" evidence="1">
    <location>
        <begin position="259"/>
        <end position="279"/>
    </location>
</feature>
<feature type="transmembrane region" description="Helical" evidence="1">
    <location>
        <begin position="289"/>
        <end position="309"/>
    </location>
</feature>
<feature type="transmembrane region" description="Helical" evidence="1">
    <location>
        <begin position="330"/>
        <end position="350"/>
    </location>
</feature>
<feature type="transmembrane region" description="Helical" evidence="1">
    <location>
        <begin position="361"/>
        <end position="383"/>
    </location>
</feature>
<feature type="transmembrane region" description="Helical" evidence="1">
    <location>
        <begin position="395"/>
        <end position="415"/>
    </location>
</feature>
<feature type="transmembrane region" description="Helical" evidence="1">
    <location>
        <begin position="452"/>
        <end position="472"/>
    </location>
</feature>
<feature type="region of interest" description="Disordered" evidence="3">
    <location>
        <begin position="1"/>
        <end position="46"/>
    </location>
</feature>
<feature type="compositionally biased region" description="Basic and acidic residues" evidence="3">
    <location>
        <begin position="1"/>
        <end position="25"/>
    </location>
</feature>
<feature type="glycosylation site" description="N-linked (GlcNAc...) asparagine" evidence="2">
    <location>
        <position position="312"/>
    </location>
</feature>
<feature type="glycosylation site" description="N-linked (GlcNAc...) asparagine" evidence="2">
    <location>
        <position position="322"/>
    </location>
</feature>
<comment type="function">
    <text evidence="4">Efflux pump that might be required for efficient secretion of hypothemycin or other secondary metabolies produced by the hypothemycin gene cluster (PubMed:18567690).</text>
</comment>
<comment type="subcellular location">
    <subcellularLocation>
        <location evidence="6">Cell membrane</location>
        <topology evidence="1">Multi-pass membrane protein</topology>
    </subcellularLocation>
</comment>
<comment type="similarity">
    <text evidence="6">Belongs to the major facilitator superfamily. TCR/Tet family.</text>
</comment>
<name>HPM6_HYPSB</name>
<sequence>MEKHAEPEKSLGDKEFQEKELHEKPAPAASEDISGDSSVNKEDGPDPINDNYLSGLRLAVVMFALCISNFLVALDTTILATAVPKISSDFNSLQDVGWYTSSYLLTNCAFQLFYGKLYTRFKVKIVFTVAMIIFEIGSLLCGVAPNSPVFIFGRAIAGLGSAGAFSGALIIVIHSVQAEKRAQYSGMIVGMYGLASVAAPLIGGAFTDHVTWRWCFYINLPCGGVAIAGLLFFFHSPPQAAVKETAAGLWAKIAKFDPFGTFFFLCSMICLLLALQMGGSTYPFTDARIIVLLVLFGLLLVAFIVVQFFDKNATIPPRVMKNRSVAFGMIYMFCVGAQFLVLVTFMPIWFQGVRAMSATDSGIRSLPILLSNTFCVVLAGALVSMTGYYIPFMWASVVLTSIGAGLLTTLTVDASTGKWVGYQIIAGIGGGLGYQQGISVAQTVLKGSDMTIGTAVMVFVQLLGGTILVSAANNILVTRLVENLERLAPHINPEIILRAGASGIKTAVSEADYPFVIEAYNIALTKTFQIALIVSCLGAIGAAGVEWKRGSKKGDSDEPAIMAV</sequence>
<protein>
    <recommendedName>
        <fullName evidence="5">Efflux pump hmp6</fullName>
    </recommendedName>
    <alternativeName>
        <fullName evidence="5">Hypothemycin biosynthesis cluster protein hpm6</fullName>
    </alternativeName>
</protein>
<keyword id="KW-1003">Cell membrane</keyword>
<keyword id="KW-0325">Glycoprotein</keyword>
<keyword id="KW-0472">Membrane</keyword>
<keyword id="KW-0812">Transmembrane</keyword>
<keyword id="KW-1133">Transmembrane helix</keyword>
<keyword id="KW-0813">Transport</keyword>
<gene>
    <name evidence="5" type="primary">hpm6</name>
</gene>
<organism>
    <name type="scientific">Hypomyces subiculosus</name>
    <name type="common">Nectria subiculosa</name>
    <dbReference type="NCBI Taxonomy" id="193393"/>
    <lineage>
        <taxon>Eukaryota</taxon>
        <taxon>Fungi</taxon>
        <taxon>Dikarya</taxon>
        <taxon>Ascomycota</taxon>
        <taxon>Pezizomycotina</taxon>
        <taxon>Sordariomycetes</taxon>
        <taxon>Hypocreomycetidae</taxon>
        <taxon>Hypocreales</taxon>
        <taxon>Hypocreaceae</taxon>
        <taxon>Hypomyces</taxon>
    </lineage>
</organism>
<proteinExistence type="inferred from homology"/>
<accession>B3FWS2</accession>
<dbReference type="EMBL" id="EU520417">
    <property type="protein sequence ID" value="ACD39756.1"/>
    <property type="molecule type" value="Genomic_DNA"/>
</dbReference>
<dbReference type="EMBL" id="EU520418">
    <property type="protein sequence ID" value="ACD39765.1"/>
    <property type="molecule type" value="Genomic_DNA"/>
</dbReference>
<dbReference type="SMR" id="B3FWS2"/>
<dbReference type="GlyCosmos" id="B3FWS2">
    <property type="glycosylation" value="2 sites, No reported glycans"/>
</dbReference>
<dbReference type="GO" id="GO:0005886">
    <property type="term" value="C:plasma membrane"/>
    <property type="evidence" value="ECO:0007669"/>
    <property type="project" value="UniProtKB-SubCell"/>
</dbReference>
<dbReference type="GO" id="GO:0022857">
    <property type="term" value="F:transmembrane transporter activity"/>
    <property type="evidence" value="ECO:0007669"/>
    <property type="project" value="InterPro"/>
</dbReference>
<dbReference type="CDD" id="cd17502">
    <property type="entry name" value="MFS_Azr1_MDR_like"/>
    <property type="match status" value="1"/>
</dbReference>
<dbReference type="FunFam" id="1.20.1250.20:FF:000196">
    <property type="entry name" value="MFS toxin efflux pump (AflT)"/>
    <property type="match status" value="1"/>
</dbReference>
<dbReference type="FunFam" id="1.20.1720.10:FF:000012">
    <property type="entry name" value="MFS toxin efflux pump (AflT)"/>
    <property type="match status" value="1"/>
</dbReference>
<dbReference type="Gene3D" id="1.20.1250.20">
    <property type="entry name" value="MFS general substrate transporter like domains"/>
    <property type="match status" value="2"/>
</dbReference>
<dbReference type="InterPro" id="IPR011701">
    <property type="entry name" value="MFS"/>
</dbReference>
<dbReference type="InterPro" id="IPR020846">
    <property type="entry name" value="MFS_dom"/>
</dbReference>
<dbReference type="InterPro" id="IPR036259">
    <property type="entry name" value="MFS_trans_sf"/>
</dbReference>
<dbReference type="PANTHER" id="PTHR23501">
    <property type="entry name" value="MAJOR FACILITATOR SUPERFAMILY"/>
    <property type="match status" value="1"/>
</dbReference>
<dbReference type="PANTHER" id="PTHR23501:SF199">
    <property type="entry name" value="MFS EFFLUX TRANSPORTER INPD-RELATED"/>
    <property type="match status" value="1"/>
</dbReference>
<dbReference type="Pfam" id="PF07690">
    <property type="entry name" value="MFS_1"/>
    <property type="match status" value="1"/>
</dbReference>
<dbReference type="SUPFAM" id="SSF103473">
    <property type="entry name" value="MFS general substrate transporter"/>
    <property type="match status" value="1"/>
</dbReference>
<dbReference type="PROSITE" id="PS50850">
    <property type="entry name" value="MFS"/>
    <property type="match status" value="1"/>
</dbReference>
<evidence type="ECO:0000255" key="1"/>
<evidence type="ECO:0000255" key="2">
    <source>
        <dbReference type="PROSITE-ProRule" id="PRU00498"/>
    </source>
</evidence>
<evidence type="ECO:0000256" key="3">
    <source>
        <dbReference type="SAM" id="MobiDB-lite"/>
    </source>
</evidence>
<evidence type="ECO:0000269" key="4">
    <source>
    </source>
</evidence>
<evidence type="ECO:0000303" key="5">
    <source>
    </source>
</evidence>
<evidence type="ECO:0000305" key="6"/>
<reference key="1">
    <citation type="journal article" date="2008" name="Appl. Environ. Microbiol.">
        <title>Genes for the biosynthesis of the fungal polyketides hypothemycin from Hypomyces subiculosus and radicicol from Pochonia chlamydosporia.</title>
        <authorList>
            <person name="Reeves C.D."/>
            <person name="Hu Z."/>
            <person name="Reid R."/>
            <person name="Kealey J.T."/>
        </authorList>
    </citation>
    <scope>NUCLEOTIDE SEQUENCE [GENOMIC DNA]</scope>
    <scope>FUNCTION</scope>
    <source>
        <strain>DSM11931</strain>
        <strain>DSM11932</strain>
    </source>
</reference>
<reference key="2">
    <citation type="journal article" date="2010" name="J. Am. Chem. Soc.">
        <title>Enzymatic synthesis of resorcylic acid lactones by cooperation of fungal iterative polyketide synthases involved in hypothemycin biosynthesis.</title>
        <authorList>
            <person name="Zhou H."/>
            <person name="Qiao K."/>
            <person name="Gao Z."/>
            <person name="Meehan M.J."/>
            <person name="Li J.W."/>
            <person name="Zhao X."/>
            <person name="Dorrestein P.C."/>
            <person name="Vederas J.C."/>
            <person name="Tang Y."/>
        </authorList>
    </citation>
    <scope>FUNCTION</scope>
</reference>